<accession>A3CKD4</accession>
<name>RPOC_STRSV</name>
<reference key="1">
    <citation type="journal article" date="2007" name="J. Bacteriol.">
        <title>Genome of the opportunistic pathogen Streptococcus sanguinis.</title>
        <authorList>
            <person name="Xu P."/>
            <person name="Alves J.M."/>
            <person name="Kitten T."/>
            <person name="Brown A."/>
            <person name="Chen Z."/>
            <person name="Ozaki L.S."/>
            <person name="Manque P."/>
            <person name="Ge X."/>
            <person name="Serrano M.G."/>
            <person name="Puiu D."/>
            <person name="Hendricks S."/>
            <person name="Wang Y."/>
            <person name="Chaplin M.D."/>
            <person name="Akan D."/>
            <person name="Paik S."/>
            <person name="Peterson D.L."/>
            <person name="Macrina F.L."/>
            <person name="Buck G.A."/>
        </authorList>
    </citation>
    <scope>NUCLEOTIDE SEQUENCE [LARGE SCALE GENOMIC DNA]</scope>
    <source>
        <strain>SK36</strain>
    </source>
</reference>
<organism>
    <name type="scientific">Streptococcus sanguinis (strain SK36)</name>
    <dbReference type="NCBI Taxonomy" id="388919"/>
    <lineage>
        <taxon>Bacteria</taxon>
        <taxon>Bacillati</taxon>
        <taxon>Bacillota</taxon>
        <taxon>Bacilli</taxon>
        <taxon>Lactobacillales</taxon>
        <taxon>Streptococcaceae</taxon>
        <taxon>Streptococcus</taxon>
    </lineage>
</organism>
<protein>
    <recommendedName>
        <fullName evidence="1">DNA-directed RNA polymerase subunit beta'</fullName>
        <shortName evidence="1">RNAP subunit beta'</shortName>
        <ecNumber evidence="1">2.7.7.6</ecNumber>
    </recommendedName>
    <alternativeName>
        <fullName evidence="1">RNA polymerase subunit beta'</fullName>
    </alternativeName>
    <alternativeName>
        <fullName evidence="1">Transcriptase subunit beta'</fullName>
    </alternativeName>
</protein>
<dbReference type="EC" id="2.7.7.6" evidence="1"/>
<dbReference type="EMBL" id="CP000387">
    <property type="protein sequence ID" value="ABN43639.1"/>
    <property type="molecule type" value="Genomic_DNA"/>
</dbReference>
<dbReference type="RefSeq" id="WP_011836355.1">
    <property type="nucleotide sequence ID" value="NC_009009.1"/>
</dbReference>
<dbReference type="RefSeq" id="YP_001034189.1">
    <property type="nucleotide sequence ID" value="NC_009009.1"/>
</dbReference>
<dbReference type="SMR" id="A3CKD4"/>
<dbReference type="STRING" id="388919.SSA_0177"/>
<dbReference type="KEGG" id="ssa:SSA_0177"/>
<dbReference type="PATRIC" id="fig|388919.9.peg.173"/>
<dbReference type="eggNOG" id="COG0086">
    <property type="taxonomic scope" value="Bacteria"/>
</dbReference>
<dbReference type="HOGENOM" id="CLU_000524_3_1_9"/>
<dbReference type="OrthoDB" id="9815296at2"/>
<dbReference type="Proteomes" id="UP000002148">
    <property type="component" value="Chromosome"/>
</dbReference>
<dbReference type="GO" id="GO:0000428">
    <property type="term" value="C:DNA-directed RNA polymerase complex"/>
    <property type="evidence" value="ECO:0007669"/>
    <property type="project" value="UniProtKB-KW"/>
</dbReference>
<dbReference type="GO" id="GO:0003677">
    <property type="term" value="F:DNA binding"/>
    <property type="evidence" value="ECO:0007669"/>
    <property type="project" value="UniProtKB-UniRule"/>
</dbReference>
<dbReference type="GO" id="GO:0003899">
    <property type="term" value="F:DNA-directed RNA polymerase activity"/>
    <property type="evidence" value="ECO:0007669"/>
    <property type="project" value="UniProtKB-UniRule"/>
</dbReference>
<dbReference type="GO" id="GO:0000287">
    <property type="term" value="F:magnesium ion binding"/>
    <property type="evidence" value="ECO:0007669"/>
    <property type="project" value="UniProtKB-UniRule"/>
</dbReference>
<dbReference type="GO" id="GO:0008270">
    <property type="term" value="F:zinc ion binding"/>
    <property type="evidence" value="ECO:0007669"/>
    <property type="project" value="UniProtKB-UniRule"/>
</dbReference>
<dbReference type="GO" id="GO:0006351">
    <property type="term" value="P:DNA-templated transcription"/>
    <property type="evidence" value="ECO:0007669"/>
    <property type="project" value="UniProtKB-UniRule"/>
</dbReference>
<dbReference type="CDD" id="cd02655">
    <property type="entry name" value="RNAP_beta'_C"/>
    <property type="match status" value="1"/>
</dbReference>
<dbReference type="CDD" id="cd01609">
    <property type="entry name" value="RNAP_beta'_N"/>
    <property type="match status" value="1"/>
</dbReference>
<dbReference type="FunFam" id="1.10.150.390:FF:000002">
    <property type="entry name" value="DNA-directed RNA polymerase subunit beta"/>
    <property type="match status" value="1"/>
</dbReference>
<dbReference type="FunFam" id="4.10.860.120:FF:000001">
    <property type="entry name" value="DNA-directed RNA polymerase subunit beta"/>
    <property type="match status" value="1"/>
</dbReference>
<dbReference type="Gene3D" id="1.10.132.30">
    <property type="match status" value="1"/>
</dbReference>
<dbReference type="Gene3D" id="1.10.150.390">
    <property type="match status" value="1"/>
</dbReference>
<dbReference type="Gene3D" id="1.10.1790.20">
    <property type="match status" value="1"/>
</dbReference>
<dbReference type="Gene3D" id="1.10.40.90">
    <property type="match status" value="1"/>
</dbReference>
<dbReference type="Gene3D" id="2.40.40.20">
    <property type="match status" value="1"/>
</dbReference>
<dbReference type="Gene3D" id="2.40.50.100">
    <property type="match status" value="1"/>
</dbReference>
<dbReference type="Gene3D" id="4.10.860.120">
    <property type="entry name" value="RNA polymerase II, clamp domain"/>
    <property type="match status" value="1"/>
</dbReference>
<dbReference type="Gene3D" id="1.10.274.100">
    <property type="entry name" value="RNA polymerase Rpb1, domain 3"/>
    <property type="match status" value="1"/>
</dbReference>
<dbReference type="HAMAP" id="MF_01322">
    <property type="entry name" value="RNApol_bact_RpoC"/>
    <property type="match status" value="1"/>
</dbReference>
<dbReference type="InterPro" id="IPR045867">
    <property type="entry name" value="DNA-dir_RpoC_beta_prime"/>
</dbReference>
<dbReference type="InterPro" id="IPR012754">
    <property type="entry name" value="DNA-dir_RpoC_beta_prime_bact"/>
</dbReference>
<dbReference type="InterPro" id="IPR000722">
    <property type="entry name" value="RNA_pol_asu"/>
</dbReference>
<dbReference type="InterPro" id="IPR006592">
    <property type="entry name" value="RNA_pol_N"/>
</dbReference>
<dbReference type="InterPro" id="IPR007080">
    <property type="entry name" value="RNA_pol_Rpb1_1"/>
</dbReference>
<dbReference type="InterPro" id="IPR007066">
    <property type="entry name" value="RNA_pol_Rpb1_3"/>
</dbReference>
<dbReference type="InterPro" id="IPR042102">
    <property type="entry name" value="RNA_pol_Rpb1_3_sf"/>
</dbReference>
<dbReference type="InterPro" id="IPR007083">
    <property type="entry name" value="RNA_pol_Rpb1_4"/>
</dbReference>
<dbReference type="InterPro" id="IPR007081">
    <property type="entry name" value="RNA_pol_Rpb1_5"/>
</dbReference>
<dbReference type="InterPro" id="IPR044893">
    <property type="entry name" value="RNA_pol_Rpb1_clamp_domain"/>
</dbReference>
<dbReference type="InterPro" id="IPR038120">
    <property type="entry name" value="Rpb1_funnel_sf"/>
</dbReference>
<dbReference type="NCBIfam" id="TIGR02386">
    <property type="entry name" value="rpoC_TIGR"/>
    <property type="match status" value="1"/>
</dbReference>
<dbReference type="PANTHER" id="PTHR19376">
    <property type="entry name" value="DNA-DIRECTED RNA POLYMERASE"/>
    <property type="match status" value="1"/>
</dbReference>
<dbReference type="PANTHER" id="PTHR19376:SF54">
    <property type="entry name" value="DNA-DIRECTED RNA POLYMERASE SUBUNIT BETA"/>
    <property type="match status" value="1"/>
</dbReference>
<dbReference type="Pfam" id="PF04997">
    <property type="entry name" value="RNA_pol_Rpb1_1"/>
    <property type="match status" value="1"/>
</dbReference>
<dbReference type="Pfam" id="PF00623">
    <property type="entry name" value="RNA_pol_Rpb1_2"/>
    <property type="match status" value="2"/>
</dbReference>
<dbReference type="Pfam" id="PF04983">
    <property type="entry name" value="RNA_pol_Rpb1_3"/>
    <property type="match status" value="1"/>
</dbReference>
<dbReference type="Pfam" id="PF05000">
    <property type="entry name" value="RNA_pol_Rpb1_4"/>
    <property type="match status" value="1"/>
</dbReference>
<dbReference type="Pfam" id="PF04998">
    <property type="entry name" value="RNA_pol_Rpb1_5"/>
    <property type="match status" value="1"/>
</dbReference>
<dbReference type="SMART" id="SM00663">
    <property type="entry name" value="RPOLA_N"/>
    <property type="match status" value="1"/>
</dbReference>
<dbReference type="SUPFAM" id="SSF64484">
    <property type="entry name" value="beta and beta-prime subunits of DNA dependent RNA-polymerase"/>
    <property type="match status" value="1"/>
</dbReference>
<proteinExistence type="inferred from homology"/>
<comment type="function">
    <text evidence="1">DNA-dependent RNA polymerase catalyzes the transcription of DNA into RNA using the four ribonucleoside triphosphates as substrates.</text>
</comment>
<comment type="catalytic activity">
    <reaction evidence="1">
        <text>RNA(n) + a ribonucleoside 5'-triphosphate = RNA(n+1) + diphosphate</text>
        <dbReference type="Rhea" id="RHEA:21248"/>
        <dbReference type="Rhea" id="RHEA-COMP:14527"/>
        <dbReference type="Rhea" id="RHEA-COMP:17342"/>
        <dbReference type="ChEBI" id="CHEBI:33019"/>
        <dbReference type="ChEBI" id="CHEBI:61557"/>
        <dbReference type="ChEBI" id="CHEBI:140395"/>
        <dbReference type="EC" id="2.7.7.6"/>
    </reaction>
</comment>
<comment type="cofactor">
    <cofactor evidence="1">
        <name>Mg(2+)</name>
        <dbReference type="ChEBI" id="CHEBI:18420"/>
    </cofactor>
    <text evidence="1">Binds 1 Mg(2+) ion per subunit.</text>
</comment>
<comment type="cofactor">
    <cofactor evidence="1">
        <name>Zn(2+)</name>
        <dbReference type="ChEBI" id="CHEBI:29105"/>
    </cofactor>
    <text evidence="1">Binds 2 Zn(2+) ions per subunit.</text>
</comment>
<comment type="subunit">
    <text evidence="1">The RNAP catalytic core consists of 2 alpha, 1 beta, 1 beta' and 1 omega subunit. When a sigma factor is associated with the core the holoenzyme is formed, which can initiate transcription.</text>
</comment>
<comment type="similarity">
    <text evidence="1">Belongs to the RNA polymerase beta' chain family.</text>
</comment>
<keyword id="KW-0240">DNA-directed RNA polymerase</keyword>
<keyword id="KW-0460">Magnesium</keyword>
<keyword id="KW-0479">Metal-binding</keyword>
<keyword id="KW-0548">Nucleotidyltransferase</keyword>
<keyword id="KW-1185">Reference proteome</keyword>
<keyword id="KW-0804">Transcription</keyword>
<keyword id="KW-0808">Transferase</keyword>
<keyword id="KW-0862">Zinc</keyword>
<gene>
    <name evidence="1" type="primary">rpoC</name>
    <name type="ordered locus">SSA_0177</name>
</gene>
<sequence length="1215" mass="135767">MVDVNRFKSMQITLASPNKVRSWSYGEVKKPETINYRTLKPEREGLFDEVIFGPTKDWECACGKYKRIRYKGIVCDRCGVEVTRAKVRRERMGHIELKAPVSHIWYFKGIPSRMGLTLDMSPRALEEVIYFAAYVVIDPKDTPLEHKSIMTEREYRERLREYGAGSFVAKMGAEAIQDLLKQVDLEAEIAVLKEELKTASGQKRIKAVRRLDVLDAFYKSGNKPEWMVLNILPVIPPDLRPMVQLDGGRFAASDLNDLYRRVINRNNRLARLLELNAPGIIVQNEKRMLQEAVDALIDNGRRGRPITGPGSRPLKSLSHMLKGKQGRFRQNLLGKRVDFSGRSVIAVGPTLKMYQCGVPREMAIELFKPFVMREIVARDIVQNVKAAKRLVERGDERIWDILEEVIKEHPVLLNRAPTLHRLGIQAFEPVLIDGKALRLHPLVCEAYNADFDGDQMAIHVPLSEEAQAEARILMLAAEHILNPKDGKPVVTPSQDMVLGNYYLTMEEAGREGEGMIFKDMDEAVMALRNGYVHLHTRVGIATDSLNKPWTEDQKHKILITTVGKILFNAIMPEELPYLQEPTNANLTEGVPAKYFLESGQDIKEVIEQLEINVPFKKKNLGNIIAEIFKRFRTTETSALLDRLKNLGYHHSTLAGLTVGIADIPVVEDKAEIIEESHKRVEQITKQFRRGMITDDERYNAVTAEWRAAREKLEKRLVANQDPKNPIVMMMDSGARGNISNFSQLAGMRGLMAAPNGRIMELPILSNFREGLSVLEMFFSTHGARKGMTDTALKTADSGYLTRRLVDVAQDVIIREDDCGTDRGLLITSITEGKEMIESLEERLNGRYTKKTVKHPETGAVIIGPNELITEDKAREIVNAGVEEVTIRSVFTCNTRHGVCRHCYGINLATGDAVEVGEAVGTIAAQSIGEPGTQLTMRTFHTGGVASNTDITQGLPRVQEIFEARNPKGEAVITEVKGEVTAIEEDASTRTKKVFVKGQTGEGEYVVPFTARMKVEVGDQVSRGAALTEGSIQPKHLLAVRDVLSVETYLLAEVQKVYRSQGVEIGDKHIEVMVRQMIRKVRVMDPGDTDLLMGTLMDITDFTDANRDVVISGGVPATARPVLMGITKASLETNSFLSAASFQETTRVLTDAAIRGKKDHLLGLKENVIIGKIIPAGTGMARYRNLEPQAVNEVEIIDEVTELPDGFETEENIVLK</sequence>
<feature type="chain" id="PRO_0000308889" description="DNA-directed RNA polymerase subunit beta'">
    <location>
        <begin position="1"/>
        <end position="1215"/>
    </location>
</feature>
<feature type="binding site" evidence="1">
    <location>
        <position position="60"/>
    </location>
    <ligand>
        <name>Zn(2+)</name>
        <dbReference type="ChEBI" id="CHEBI:29105"/>
        <label>1</label>
    </ligand>
</feature>
<feature type="binding site" evidence="1">
    <location>
        <position position="62"/>
    </location>
    <ligand>
        <name>Zn(2+)</name>
        <dbReference type="ChEBI" id="CHEBI:29105"/>
        <label>1</label>
    </ligand>
</feature>
<feature type="binding site" evidence="1">
    <location>
        <position position="75"/>
    </location>
    <ligand>
        <name>Zn(2+)</name>
        <dbReference type="ChEBI" id="CHEBI:29105"/>
        <label>1</label>
    </ligand>
</feature>
<feature type="binding site" evidence="1">
    <location>
        <position position="78"/>
    </location>
    <ligand>
        <name>Zn(2+)</name>
        <dbReference type="ChEBI" id="CHEBI:29105"/>
        <label>1</label>
    </ligand>
</feature>
<feature type="binding site" evidence="1">
    <location>
        <position position="450"/>
    </location>
    <ligand>
        <name>Mg(2+)</name>
        <dbReference type="ChEBI" id="CHEBI:18420"/>
    </ligand>
</feature>
<feature type="binding site" evidence="1">
    <location>
        <position position="452"/>
    </location>
    <ligand>
        <name>Mg(2+)</name>
        <dbReference type="ChEBI" id="CHEBI:18420"/>
    </ligand>
</feature>
<feature type="binding site" evidence="1">
    <location>
        <position position="454"/>
    </location>
    <ligand>
        <name>Mg(2+)</name>
        <dbReference type="ChEBI" id="CHEBI:18420"/>
    </ligand>
</feature>
<feature type="binding site" evidence="1">
    <location>
        <position position="818"/>
    </location>
    <ligand>
        <name>Zn(2+)</name>
        <dbReference type="ChEBI" id="CHEBI:29105"/>
        <label>2</label>
    </ligand>
</feature>
<feature type="binding site" evidence="1">
    <location>
        <position position="892"/>
    </location>
    <ligand>
        <name>Zn(2+)</name>
        <dbReference type="ChEBI" id="CHEBI:29105"/>
        <label>2</label>
    </ligand>
</feature>
<feature type="binding site" evidence="1">
    <location>
        <position position="899"/>
    </location>
    <ligand>
        <name>Zn(2+)</name>
        <dbReference type="ChEBI" id="CHEBI:29105"/>
        <label>2</label>
    </ligand>
</feature>
<feature type="binding site" evidence="1">
    <location>
        <position position="902"/>
    </location>
    <ligand>
        <name>Zn(2+)</name>
        <dbReference type="ChEBI" id="CHEBI:29105"/>
        <label>2</label>
    </ligand>
</feature>
<evidence type="ECO:0000255" key="1">
    <source>
        <dbReference type="HAMAP-Rule" id="MF_01322"/>
    </source>
</evidence>